<evidence type="ECO:0000256" key="1">
    <source>
        <dbReference type="SAM" id="MobiDB-lite"/>
    </source>
</evidence>
<keyword id="KW-1185">Reference proteome</keyword>
<organism>
    <name type="scientific">Caenorhabditis elegans</name>
    <dbReference type="NCBI Taxonomy" id="6239"/>
    <lineage>
        <taxon>Eukaryota</taxon>
        <taxon>Metazoa</taxon>
        <taxon>Ecdysozoa</taxon>
        <taxon>Nematoda</taxon>
        <taxon>Chromadorea</taxon>
        <taxon>Rhabditida</taxon>
        <taxon>Rhabditina</taxon>
        <taxon>Rhabditomorpha</taxon>
        <taxon>Rhabditoidea</taxon>
        <taxon>Rhabditidae</taxon>
        <taxon>Peloderinae</taxon>
        <taxon>Caenorhabditis</taxon>
    </lineage>
</organism>
<accession>Q10926</accession>
<gene>
    <name type="ORF">B0302.2</name>
</gene>
<sequence>MQPGTGLSFDISQILKQGSDPKQKLPERQAIVL</sequence>
<reference key="1">
    <citation type="journal article" date="1998" name="Science">
        <title>Genome sequence of the nematode C. elegans: a platform for investigating biology.</title>
        <authorList>
            <consortium name="The C. elegans sequencing consortium"/>
        </authorList>
    </citation>
    <scope>NUCLEOTIDE SEQUENCE [LARGE SCALE GENOMIC DNA]</scope>
    <source>
        <strain>Bristol N2</strain>
    </source>
</reference>
<feature type="chain" id="PRO_0000065060" description="Uncharacterized protein B0302.2">
    <location>
        <begin position="1"/>
        <end position="33"/>
    </location>
</feature>
<feature type="region of interest" description="Disordered" evidence="1">
    <location>
        <begin position="1"/>
        <end position="33"/>
    </location>
</feature>
<dbReference type="EMBL" id="FO080160">
    <property type="protein sequence ID" value="CCD61698.1"/>
    <property type="molecule type" value="Genomic_DNA"/>
</dbReference>
<dbReference type="PIR" id="T15315">
    <property type="entry name" value="T15315"/>
</dbReference>
<dbReference type="RefSeq" id="NP_510782.2">
    <property type="nucleotide sequence ID" value="NM_078381.4"/>
</dbReference>
<dbReference type="BioGRID" id="46777">
    <property type="interactions" value="1"/>
</dbReference>
<dbReference type="PaxDb" id="6239-B0302.2"/>
<dbReference type="EnsemblMetazoa" id="B0302.2.1">
    <property type="protein sequence ID" value="B0302.2.1"/>
    <property type="gene ID" value="WBGene00015119"/>
</dbReference>
<dbReference type="GeneID" id="181911"/>
<dbReference type="KEGG" id="cel:CELE_B0302.2"/>
<dbReference type="UCSC" id="B0302.2">
    <property type="organism name" value="c. elegans"/>
</dbReference>
<dbReference type="AGR" id="WB:WBGene00015119"/>
<dbReference type="CTD" id="181911"/>
<dbReference type="WormBase" id="B0302.2">
    <property type="protein sequence ID" value="CE39887"/>
    <property type="gene ID" value="WBGene00015119"/>
</dbReference>
<dbReference type="HOGENOM" id="CLU_3385261_0_0_1"/>
<dbReference type="InParanoid" id="Q10926"/>
<dbReference type="PRO" id="PR:Q10926"/>
<dbReference type="Proteomes" id="UP000001940">
    <property type="component" value="Chromosome X"/>
</dbReference>
<dbReference type="Bgee" id="WBGene00015119">
    <property type="expression patterns" value="Expressed in embryo and 2 other cell types or tissues"/>
</dbReference>
<protein>
    <recommendedName>
        <fullName>Uncharacterized protein B0302.2</fullName>
    </recommendedName>
</protein>
<proteinExistence type="predicted"/>
<name>YWR2_CAEEL</name>